<name>ITA3_DROME</name>
<evidence type="ECO:0000255" key="1"/>
<evidence type="ECO:0000255" key="2">
    <source>
        <dbReference type="PROSITE-ProRule" id="PRU00803"/>
    </source>
</evidence>
<evidence type="ECO:0000269" key="3">
    <source>
    </source>
</evidence>
<evidence type="ECO:0000269" key="4">
    <source>
    </source>
</evidence>
<evidence type="ECO:0000269" key="5">
    <source>
    </source>
</evidence>
<evidence type="ECO:0000269" key="6">
    <source>
    </source>
</evidence>
<evidence type="ECO:0000269" key="7">
    <source>
    </source>
</evidence>
<evidence type="ECO:0000269" key="8">
    <source>
    </source>
</evidence>
<evidence type="ECO:0000269" key="9">
    <source>
    </source>
</evidence>
<evidence type="ECO:0000269" key="10">
    <source>
    </source>
</evidence>
<evidence type="ECO:0000303" key="11">
    <source>
    </source>
</evidence>
<evidence type="ECO:0000303" key="12">
    <source ref="5"/>
</evidence>
<evidence type="ECO:0000305" key="13"/>
<accession>O44386</accession>
<accession>O44387</accession>
<accession>O46186</accession>
<accession>Q58CK3</accession>
<accession>Q6AWK3</accession>
<accession>Q9V7A3</accession>
<protein>
    <recommendedName>
        <fullName>Integrin alpha-PS3</fullName>
    </recommendedName>
    <alternativeName>
        <fullName>Position-specific antigen subunit alpha-3</fullName>
        <shortName>Protein scab</shortName>
    </alternativeName>
    <alternativeName>
        <fullName>Protein volado</fullName>
    </alternativeName>
    <component>
        <recommendedName>
            <fullName>Integrin alpha-PS3 heavy chain</fullName>
        </recommendedName>
    </component>
    <component>
        <recommendedName>
            <fullName>Integrin alpha-PS3 light chain</fullName>
        </recommendedName>
    </component>
</protein>
<feature type="signal peptide" evidence="1">
    <location>
        <begin position="1"/>
        <end position="24"/>
    </location>
</feature>
<feature type="chain" id="PRO_0000016326" description="Integrin alpha-PS3">
    <location>
        <begin position="25"/>
        <end position="1115"/>
    </location>
</feature>
<feature type="chain" id="PRO_0000016327" description="Integrin alpha-PS3 heavy chain" evidence="1">
    <location>
        <begin position="25"/>
        <end position="929" status="uncertain"/>
    </location>
</feature>
<feature type="chain" id="PRO_0000016328" description="Integrin alpha-PS3 light chain" evidence="1">
    <location>
        <begin position="930" status="uncertain"/>
        <end position="1115"/>
    </location>
</feature>
<feature type="topological domain" description="Extracellular" evidence="1">
    <location>
        <begin position="25"/>
        <end position="1054"/>
    </location>
</feature>
<feature type="transmembrane region" description="Helical" evidence="1">
    <location>
        <begin position="1055"/>
        <end position="1075"/>
    </location>
</feature>
<feature type="topological domain" description="Cytoplasmic" evidence="1">
    <location>
        <begin position="1076"/>
        <end position="1115"/>
    </location>
</feature>
<feature type="repeat" description="FG-GAP 1" evidence="2">
    <location>
        <begin position="39"/>
        <end position="99"/>
    </location>
</feature>
<feature type="repeat" description="FG-GAP 2" evidence="2">
    <location>
        <begin position="113"/>
        <end position="174"/>
    </location>
</feature>
<feature type="repeat" description="FG-GAP 3" evidence="2">
    <location>
        <begin position="193"/>
        <end position="246"/>
    </location>
</feature>
<feature type="repeat" description="FG-GAP 4" evidence="2">
    <location>
        <begin position="278"/>
        <end position="335"/>
    </location>
</feature>
<feature type="repeat" description="FG-GAP 5" evidence="2">
    <location>
        <begin position="336"/>
        <end position="397"/>
    </location>
</feature>
<feature type="repeat" description="FG-GAP 6" evidence="2">
    <location>
        <begin position="398"/>
        <end position="453"/>
    </location>
</feature>
<feature type="repeat" description="FG-GAP 7" evidence="2">
    <location>
        <begin position="460"/>
        <end position="522"/>
    </location>
</feature>
<feature type="glycosylation site" description="N-linked (GlcNAc...) asparagine" evidence="1">
    <location>
        <position position="46"/>
    </location>
</feature>
<feature type="glycosylation site" description="N-linked (GlcNAc...) asparagine" evidence="4 7">
    <location>
        <position position="82"/>
    </location>
</feature>
<feature type="glycosylation site" description="N-linked (GlcNAc...) asparagine" evidence="1">
    <location>
        <position position="166"/>
    </location>
</feature>
<feature type="glycosylation site" description="N-linked (GlcNAc...) asparagine" evidence="1">
    <location>
        <position position="438"/>
    </location>
</feature>
<feature type="glycosylation site" description="N-linked (GlcNAc...) asparagine" evidence="1">
    <location>
        <position position="696"/>
    </location>
</feature>
<feature type="glycosylation site" description="N-linked (GlcNAc...) asparagine" evidence="1">
    <location>
        <position position="845"/>
    </location>
</feature>
<feature type="glycosylation site" description="N-linked (GlcNAc...) asparagine" evidence="1">
    <location>
        <position position="868"/>
    </location>
</feature>
<feature type="glycosylation site" description="N-linked (GlcNAc...) asparagine" evidence="1">
    <location>
        <position position="964"/>
    </location>
</feature>
<feature type="splice variant" id="VSP_002740" description="In isoform A." evidence="11 12">
    <original>MNAESTMFPHIFLALLALISHIEAFNFMPRPSRVINSPKHLKFHINQTRSSYFGYTLVIRQTS</original>
    <variation>MVGQDRDFWALLVLGLWCLSSHCNAFNLSPLPNRQILDPQFATNVPKVRASYFGFTMSLRPNG</variation>
    <location>
        <begin position="1"/>
        <end position="63"/>
    </location>
</feature>
<feature type="sequence conflict" description="In Ref. 2; AAC38853/AAC38854." evidence="13" ref="2">
    <original>I</original>
    <variation>V</variation>
    <location>
        <position position="630"/>
    </location>
</feature>
<feature type="sequence conflict" description="In Ref. 2; AAC38853/AAC38854." evidence="13" ref="2">
    <original>D</original>
    <variation>N</variation>
    <location>
        <position position="664"/>
    </location>
</feature>
<feature type="sequence conflict" description="In Ref. 2; AAC38853/AAC38854." evidence="13" ref="2">
    <original>I</original>
    <variation>S</variation>
    <location>
        <position position="753"/>
    </location>
</feature>
<feature type="sequence conflict" description="In Ref. 2; AAC38853/AAC38854." evidence="13" ref="2">
    <original>S</original>
    <variation>R</variation>
    <location>
        <position position="792"/>
    </location>
</feature>
<gene>
    <name type="primary">scb</name>
    <name type="synonym">alphaPS3</name>
    <name type="synonym">Vol</name>
    <name type="ORF">CG8095</name>
</gene>
<organism>
    <name type="scientific">Drosophila melanogaster</name>
    <name type="common">Fruit fly</name>
    <dbReference type="NCBI Taxonomy" id="7227"/>
    <lineage>
        <taxon>Eukaryota</taxon>
        <taxon>Metazoa</taxon>
        <taxon>Ecdysozoa</taxon>
        <taxon>Arthropoda</taxon>
        <taxon>Hexapoda</taxon>
        <taxon>Insecta</taxon>
        <taxon>Pterygota</taxon>
        <taxon>Neoptera</taxon>
        <taxon>Endopterygota</taxon>
        <taxon>Diptera</taxon>
        <taxon>Brachycera</taxon>
        <taxon>Muscomorpha</taxon>
        <taxon>Ephydroidea</taxon>
        <taxon>Drosophilidae</taxon>
        <taxon>Drosophila</taxon>
        <taxon>Sophophora</taxon>
    </lineage>
</organism>
<comment type="function">
    <text evidence="5 6 8 9 10">Integrin alpha-PS3/beta-PS is a receptor for laminin. Also binds to wb. Important during embryogenesis for the development of the trachea, dorsal vessel and salivary gland, as well as for dorsal closure. Required for short-term memory processes. Minor involvement in the establishment of the oocyte anterior-posterior length. Plays a role in timely border cell migration during oogenesis, probably mediated by JNK signaling. Integrin alpha-PS3/Itgbn is required for effective phagocytosis of apoptotic cells during embryonic development and for the phagocytic elimination of S.aureus by mediating the binding of S.aureus peptidoglycan to larval hemocytes, which probably activates a signaling pathway involving Rac1 and Rac2. Integrin alpha-PS3/Itgbn also regulates Fak activity during neuromuscular junction (NMJ) growth and is required for its activation in presynapsis of NMJs. Seems to be dispensable for major morphogenetic processes.</text>
</comment>
<comment type="subunit">
    <text evidence="3 8 9">Heterodimer of an alpha and a beta subunit. The alpha subunit is composed of a heavy and a light chain linked by a disulfide bond. Interacts with mys/beta-PS and Itgbn.</text>
</comment>
<comment type="interaction">
    <interactant intactId="EBI-280866">
        <id>O44386</id>
    </interactant>
    <interactant intactId="EBI-9952238">
        <id>Q27591</id>
        <label>Itgbn</label>
    </interactant>
    <organismsDiffer>false</organismsDiffer>
    <experiments>3</experiments>
</comment>
<comment type="subcellular location">
    <subcellularLocation>
        <location>Apical cell membrane</location>
        <topology>Single-pass type I membrane protein</topology>
    </subcellularLocation>
    <subcellularLocation>
        <location>Lateral cell membrane</location>
        <topology>Single-pass type I membrane protein</topology>
    </subcellularLocation>
    <subcellularLocation>
        <location>Cytoplasm</location>
    </subcellularLocation>
    <text>Apical membrane localization in primordial dorsal-appendage cells at oogenesis stages 10B and 11. Later, weakly expressed in lateral membrane of cells surrounding the outgrowing dorsal appendages.</text>
</comment>
<comment type="alternative products">
    <event type="alternative splicing"/>
    <isoform>
        <id>O44386-1</id>
        <name>B</name>
        <name>Vol-L</name>
        <sequence type="displayed"/>
    </isoform>
    <isoform>
        <id>O44386-2</id>
        <name>A</name>
        <name>Vol-S</name>
        <sequence type="described" ref="VSP_002740"/>
    </isoform>
</comment>
<comment type="tissue specificity">
    <text evidence="3 6 8 9 10">Expressed in embryonic and larval hemocytes (at protein level). Expressed in tissues undergoing invagination, tissue movement and morphogenesis such as salivary gland, trachea, midgut endoderm, dorsal vessel, midline of the ventral nerve cord, amnioserosa and the amnioproctodeal invagination. Expressed in the mushroom body neuropil, brain areas that contain mushroom body processes in synaptic contact with other neurons. In egg chambers, expressed in border cells, in stretch cells and in dorsal appendage primordia.</text>
</comment>
<comment type="developmental stage">
    <text evidence="6 8">Expressed throughout development. Highest expression is observed in pupae (at protein level). During oogenesis, expressed from stage 10B onwards.</text>
</comment>
<comment type="disruption phenotype">
    <text evidence="8 10">Flies display impaired olfactory memories within 3 minutes of training. Mutant embryos show reduced level of phagocytosis.</text>
</comment>
<comment type="similarity">
    <text evidence="13">Belongs to the integrin alpha chain family.</text>
</comment>
<dbReference type="EMBL" id="U76605">
    <property type="protein sequence ID" value="AAC04505.1"/>
    <property type="molecule type" value="mRNA"/>
</dbReference>
<dbReference type="EMBL" id="AF034199">
    <property type="protein sequence ID" value="AAC38853.1"/>
    <property type="molecule type" value="mRNA"/>
</dbReference>
<dbReference type="EMBL" id="AF034200">
    <property type="protein sequence ID" value="AAC38854.1"/>
    <property type="molecule type" value="mRNA"/>
</dbReference>
<dbReference type="EMBL" id="AE013599">
    <property type="protein sequence ID" value="AAF58155.1"/>
    <property type="molecule type" value="Genomic_DNA"/>
</dbReference>
<dbReference type="EMBL" id="AE013599">
    <property type="protein sequence ID" value="AAF58156.1"/>
    <property type="molecule type" value="Genomic_DNA"/>
</dbReference>
<dbReference type="EMBL" id="BT015245">
    <property type="protein sequence ID" value="AAT94474.1"/>
    <property type="molecule type" value="mRNA"/>
</dbReference>
<dbReference type="EMBL" id="BT021944">
    <property type="protein sequence ID" value="AAX51649.1"/>
    <property type="molecule type" value="mRNA"/>
</dbReference>
<dbReference type="PIR" id="T09403">
    <property type="entry name" value="T09403"/>
</dbReference>
<dbReference type="PIR" id="T09433">
    <property type="entry name" value="T09433"/>
</dbReference>
<dbReference type="RefSeq" id="NP_523750.2">
    <molecule id="O44386-1"/>
    <property type="nucleotide sequence ID" value="NM_079026.3"/>
</dbReference>
<dbReference type="RefSeq" id="NP_725445.1">
    <molecule id="O44386-2"/>
    <property type="nucleotide sequence ID" value="NM_166083.2"/>
</dbReference>
<dbReference type="SMR" id="O44386"/>
<dbReference type="BioGRID" id="62429">
    <property type="interactions" value="11"/>
</dbReference>
<dbReference type="FunCoup" id="O44386">
    <property type="interactions" value="4"/>
</dbReference>
<dbReference type="IntAct" id="O44386">
    <property type="interactions" value="2"/>
</dbReference>
<dbReference type="STRING" id="7227.FBpp0086501"/>
<dbReference type="GlyCosmos" id="O44386">
    <property type="glycosylation" value="8 sites, No reported glycans"/>
</dbReference>
<dbReference type="GlyGen" id="O44386">
    <property type="glycosylation" value="9 sites"/>
</dbReference>
<dbReference type="iPTMnet" id="O44386"/>
<dbReference type="PaxDb" id="7227-FBpp0086501"/>
<dbReference type="EnsemblMetazoa" id="FBtr0087369">
    <molecule id="O44386-1"/>
    <property type="protein sequence ID" value="FBpp0086501"/>
    <property type="gene ID" value="FBgn0286785"/>
</dbReference>
<dbReference type="EnsemblMetazoa" id="FBtr0087370">
    <molecule id="O44386-2"/>
    <property type="protein sequence ID" value="FBpp0086502"/>
    <property type="gene ID" value="FBgn0286785"/>
</dbReference>
<dbReference type="GeneID" id="36692"/>
<dbReference type="KEGG" id="dme:Dmel_CG8095"/>
<dbReference type="AGR" id="FB:FBgn0286785"/>
<dbReference type="CTD" id="20242"/>
<dbReference type="FlyBase" id="FBgn0286785">
    <property type="gene designation" value="scb"/>
</dbReference>
<dbReference type="VEuPathDB" id="VectorBase:FBgn0286785"/>
<dbReference type="eggNOG" id="KOG3637">
    <property type="taxonomic scope" value="Eukaryota"/>
</dbReference>
<dbReference type="GeneTree" id="ENSGT00940000165133"/>
<dbReference type="InParanoid" id="O44386"/>
<dbReference type="OMA" id="VCAPRFI"/>
<dbReference type="OrthoDB" id="5573735at2759"/>
<dbReference type="PhylomeDB" id="O44386"/>
<dbReference type="Reactome" id="R-DME-210991">
    <property type="pathway name" value="Basigin interactions"/>
</dbReference>
<dbReference type="Reactome" id="R-DME-216083">
    <property type="pathway name" value="Integrin cell surface interactions"/>
</dbReference>
<dbReference type="Reactome" id="R-DME-3000170">
    <property type="pathway name" value="Syndecan interactions"/>
</dbReference>
<dbReference type="SignaLink" id="O44386"/>
<dbReference type="BioGRID-ORCS" id="36692">
    <property type="hits" value="0 hits in 3 CRISPR screens"/>
</dbReference>
<dbReference type="ChiTaRS" id="scb">
    <property type="organism name" value="fly"/>
</dbReference>
<dbReference type="GenomeRNAi" id="36692"/>
<dbReference type="PRO" id="PR:O44386"/>
<dbReference type="Proteomes" id="UP000000803">
    <property type="component" value="Chromosome 2R"/>
</dbReference>
<dbReference type="Bgee" id="FBgn0286785">
    <property type="expression patterns" value="Expressed in copper cell (Drosophila) in digestive tract and 111 other cell types or tissues"/>
</dbReference>
<dbReference type="GO" id="GO:0016324">
    <property type="term" value="C:apical plasma membrane"/>
    <property type="evidence" value="ECO:0000314"/>
    <property type="project" value="UniProtKB"/>
</dbReference>
<dbReference type="GO" id="GO:0009925">
    <property type="term" value="C:basal plasma membrane"/>
    <property type="evidence" value="ECO:0000314"/>
    <property type="project" value="UniProtKB"/>
</dbReference>
<dbReference type="GO" id="GO:0005737">
    <property type="term" value="C:cytoplasm"/>
    <property type="evidence" value="ECO:0000314"/>
    <property type="project" value="UniProtKB"/>
</dbReference>
<dbReference type="GO" id="GO:0009897">
    <property type="term" value="C:external side of plasma membrane"/>
    <property type="evidence" value="ECO:0000318"/>
    <property type="project" value="GO_Central"/>
</dbReference>
<dbReference type="GO" id="GO:0005925">
    <property type="term" value="C:focal adhesion"/>
    <property type="evidence" value="ECO:0000250"/>
    <property type="project" value="FlyBase"/>
</dbReference>
<dbReference type="GO" id="GO:0008305">
    <property type="term" value="C:integrin complex"/>
    <property type="evidence" value="ECO:0000314"/>
    <property type="project" value="FlyBase"/>
</dbReference>
<dbReference type="GO" id="GO:0016328">
    <property type="term" value="C:lateral plasma membrane"/>
    <property type="evidence" value="ECO:0007669"/>
    <property type="project" value="UniProtKB-SubCell"/>
</dbReference>
<dbReference type="GO" id="GO:0016020">
    <property type="term" value="C:membrane"/>
    <property type="evidence" value="ECO:0000314"/>
    <property type="project" value="FlyBase"/>
</dbReference>
<dbReference type="GO" id="GO:0005178">
    <property type="term" value="F:integrin binding"/>
    <property type="evidence" value="ECO:0000318"/>
    <property type="project" value="GO_Central"/>
</dbReference>
<dbReference type="GO" id="GO:0046982">
    <property type="term" value="F:protein heterodimerization activity"/>
    <property type="evidence" value="ECO:0000353"/>
    <property type="project" value="FlyBase"/>
</dbReference>
<dbReference type="GO" id="GO:0043277">
    <property type="term" value="P:apoptotic cell clearance"/>
    <property type="evidence" value="ECO:0000315"/>
    <property type="project" value="FlyBase"/>
</dbReference>
<dbReference type="GO" id="GO:0007411">
    <property type="term" value="P:axon guidance"/>
    <property type="evidence" value="ECO:0000315"/>
    <property type="project" value="FlyBase"/>
</dbReference>
<dbReference type="GO" id="GO:0048149">
    <property type="term" value="P:behavioral response to ethanol"/>
    <property type="evidence" value="ECO:0000315"/>
    <property type="project" value="FlyBase"/>
</dbReference>
<dbReference type="GO" id="GO:0033627">
    <property type="term" value="P:cell adhesion mediated by integrin"/>
    <property type="evidence" value="ECO:0000250"/>
    <property type="project" value="FlyBase"/>
</dbReference>
<dbReference type="GO" id="GO:0016477">
    <property type="term" value="P:cell migration"/>
    <property type="evidence" value="ECO:0000304"/>
    <property type="project" value="FlyBase"/>
</dbReference>
<dbReference type="GO" id="GO:0098609">
    <property type="term" value="P:cell-cell adhesion"/>
    <property type="evidence" value="ECO:0000318"/>
    <property type="project" value="GO_Central"/>
</dbReference>
<dbReference type="GO" id="GO:0007160">
    <property type="term" value="P:cell-matrix adhesion"/>
    <property type="evidence" value="ECO:0000304"/>
    <property type="project" value="FlyBase"/>
</dbReference>
<dbReference type="GO" id="GO:0007391">
    <property type="term" value="P:dorsal closure"/>
    <property type="evidence" value="ECO:0000315"/>
    <property type="project" value="FlyBase"/>
</dbReference>
<dbReference type="GO" id="GO:0035001">
    <property type="term" value="P:dorsal trunk growth, open tracheal system"/>
    <property type="evidence" value="ECO:0000315"/>
    <property type="project" value="FlyBase"/>
</dbReference>
<dbReference type="GO" id="GO:0007157">
    <property type="term" value="P:heterophilic cell-cell adhesion via plasma membrane cell adhesion molecules"/>
    <property type="evidence" value="ECO:0000304"/>
    <property type="project" value="FlyBase"/>
</dbReference>
<dbReference type="GO" id="GO:0007229">
    <property type="term" value="P:integrin-mediated signaling pathway"/>
    <property type="evidence" value="ECO:0000318"/>
    <property type="project" value="GO_Central"/>
</dbReference>
<dbReference type="GO" id="GO:0007508">
    <property type="term" value="P:larval heart development"/>
    <property type="evidence" value="ECO:0000315"/>
    <property type="project" value="FlyBase"/>
</dbReference>
<dbReference type="GO" id="GO:0007613">
    <property type="term" value="P:memory"/>
    <property type="evidence" value="ECO:0000304"/>
    <property type="project" value="FlyBase"/>
</dbReference>
<dbReference type="GO" id="GO:0007494">
    <property type="term" value="P:midgut development"/>
    <property type="evidence" value="ECO:0000304"/>
    <property type="project" value="FlyBase"/>
</dbReference>
<dbReference type="GO" id="GO:0030336">
    <property type="term" value="P:negative regulation of cell migration"/>
    <property type="evidence" value="ECO:0000315"/>
    <property type="project" value="UniProtKB"/>
</dbReference>
<dbReference type="GO" id="GO:0045886">
    <property type="term" value="P:negative regulation of synaptic assembly at neuromuscular junction"/>
    <property type="evidence" value="ECO:0000316"/>
    <property type="project" value="FlyBase"/>
</dbReference>
<dbReference type="GO" id="GO:0001555">
    <property type="term" value="P:oocyte growth"/>
    <property type="evidence" value="ECO:0000315"/>
    <property type="project" value="UniProtKB"/>
</dbReference>
<dbReference type="GO" id="GO:0003344">
    <property type="term" value="P:pericardium morphogenesis"/>
    <property type="evidence" value="ECO:0000315"/>
    <property type="project" value="FlyBase"/>
</dbReference>
<dbReference type="GO" id="GO:0006909">
    <property type="term" value="P:phagocytosis"/>
    <property type="evidence" value="ECO:0000315"/>
    <property type="project" value="FlyBase"/>
</dbReference>
<dbReference type="GO" id="GO:0007431">
    <property type="term" value="P:salivary gland development"/>
    <property type="evidence" value="ECO:0000315"/>
    <property type="project" value="FlyBase"/>
</dbReference>
<dbReference type="GO" id="GO:0007614">
    <property type="term" value="P:short-term memory"/>
    <property type="evidence" value="ECO:0000304"/>
    <property type="project" value="FlyBase"/>
</dbReference>
<dbReference type="GO" id="GO:0042060">
    <property type="term" value="P:wound healing"/>
    <property type="evidence" value="ECO:0007001"/>
    <property type="project" value="FlyBase"/>
</dbReference>
<dbReference type="FunFam" id="2.60.40.1460:FF:000014">
    <property type="entry name" value="Integrin alpha-PS3"/>
    <property type="match status" value="1"/>
</dbReference>
<dbReference type="FunFam" id="2.130.10.130:FF:000015">
    <property type="entry name" value="integrin alpha-PS3 isoform X1"/>
    <property type="match status" value="1"/>
</dbReference>
<dbReference type="FunFam" id="2.60.40.1510:FF:000023">
    <property type="entry name" value="integrin alpha-PS3 isoform X2"/>
    <property type="match status" value="1"/>
</dbReference>
<dbReference type="FunFam" id="1.20.5.930:FF:000005">
    <property type="entry name" value="Integrin, alpha 10"/>
    <property type="match status" value="1"/>
</dbReference>
<dbReference type="Gene3D" id="1.20.5.930">
    <property type="entry name" value="Bicelle-embedded integrin alpha(iib) transmembrane segment"/>
    <property type="match status" value="1"/>
</dbReference>
<dbReference type="Gene3D" id="2.130.10.130">
    <property type="entry name" value="Integrin alpha, N-terminal"/>
    <property type="match status" value="1"/>
</dbReference>
<dbReference type="Gene3D" id="2.60.40.1460">
    <property type="entry name" value="Integrin domains. Chain A, domain 2"/>
    <property type="match status" value="1"/>
</dbReference>
<dbReference type="Gene3D" id="2.60.40.1510">
    <property type="entry name" value="ntegrin, alpha v. Chain A, domain 3"/>
    <property type="match status" value="1"/>
</dbReference>
<dbReference type="InterPro" id="IPR013517">
    <property type="entry name" value="FG-GAP"/>
</dbReference>
<dbReference type="InterPro" id="IPR013519">
    <property type="entry name" value="Int_alpha_beta-p"/>
</dbReference>
<dbReference type="InterPro" id="IPR000413">
    <property type="entry name" value="Integrin_alpha"/>
</dbReference>
<dbReference type="InterPro" id="IPR018184">
    <property type="entry name" value="Integrin_alpha_C_CS"/>
</dbReference>
<dbReference type="InterPro" id="IPR013649">
    <property type="entry name" value="Integrin_alpha_Ig-like_1"/>
</dbReference>
<dbReference type="InterPro" id="IPR048285">
    <property type="entry name" value="Integrin_alpha_Ig-like_2"/>
</dbReference>
<dbReference type="InterPro" id="IPR028994">
    <property type="entry name" value="Integrin_alpha_N"/>
</dbReference>
<dbReference type="InterPro" id="IPR032695">
    <property type="entry name" value="Integrin_dom_sf"/>
</dbReference>
<dbReference type="PANTHER" id="PTHR23220">
    <property type="entry name" value="INTEGRIN ALPHA"/>
    <property type="match status" value="1"/>
</dbReference>
<dbReference type="PANTHER" id="PTHR23220:SF83">
    <property type="entry name" value="INTEGRIN ALPHA-PS3-RELATED"/>
    <property type="match status" value="1"/>
</dbReference>
<dbReference type="Pfam" id="PF01839">
    <property type="entry name" value="FG-GAP"/>
    <property type="match status" value="2"/>
</dbReference>
<dbReference type="Pfam" id="PF08441">
    <property type="entry name" value="Integrin_A_Ig_1"/>
    <property type="match status" value="1"/>
</dbReference>
<dbReference type="Pfam" id="PF20805">
    <property type="entry name" value="Integrin_A_Ig_2"/>
    <property type="match status" value="1"/>
</dbReference>
<dbReference type="PRINTS" id="PR01185">
    <property type="entry name" value="INTEGRINA"/>
</dbReference>
<dbReference type="SMART" id="SM00191">
    <property type="entry name" value="Int_alpha"/>
    <property type="match status" value="7"/>
</dbReference>
<dbReference type="SUPFAM" id="SSF69318">
    <property type="entry name" value="Integrin alpha N-terminal domain"/>
    <property type="match status" value="1"/>
</dbReference>
<dbReference type="SUPFAM" id="SSF69179">
    <property type="entry name" value="Integrin domains"/>
    <property type="match status" value="2"/>
</dbReference>
<dbReference type="PROSITE" id="PS51470">
    <property type="entry name" value="FG_GAP"/>
    <property type="match status" value="7"/>
</dbReference>
<dbReference type="PROSITE" id="PS00242">
    <property type="entry name" value="INTEGRIN_ALPHA"/>
    <property type="match status" value="1"/>
</dbReference>
<proteinExistence type="evidence at protein level"/>
<keyword id="KW-0025">Alternative splicing</keyword>
<keyword id="KW-0085">Behavior</keyword>
<keyword id="KW-0130">Cell adhesion</keyword>
<keyword id="KW-1003">Cell membrane</keyword>
<keyword id="KW-0165">Cleavage on pair of basic residues</keyword>
<keyword id="KW-0963">Cytoplasm</keyword>
<keyword id="KW-0221">Differentiation</keyword>
<keyword id="KW-1015">Disulfide bond</keyword>
<keyword id="KW-0325">Glycoprotein</keyword>
<keyword id="KW-0401">Integrin</keyword>
<keyword id="KW-0472">Membrane</keyword>
<keyword id="KW-0896">Oogenesis</keyword>
<keyword id="KW-0581">Phagocytosis</keyword>
<keyword id="KW-0675">Receptor</keyword>
<keyword id="KW-1185">Reference proteome</keyword>
<keyword id="KW-0677">Repeat</keyword>
<keyword id="KW-0732">Signal</keyword>
<keyword id="KW-0812">Transmembrane</keyword>
<keyword id="KW-1133">Transmembrane helix</keyword>
<sequence>MNAESTMFPHIFLALLALISHIEAFNFMPRPSRVINSPKHLKFHINQTRSSYFGYTLVIRQTSIIVGAPRAQSTLESQRTINETGAIYRCSLTNGVCSPYVLDSRGNVDAPYSEYTFDSERKDFQWLGGSMDGGTKDTDKLLVCAPRFYAPSSRDNHLHGVCYWVNNTVASTPQHVTRISPLRLKSEQVKEEDNGNKASFFYIMGELGLSAHVADDNTKFLIGAPGINTWRGSVILYRQVDPVDNPTASRRDTSKALRRTYRDVDSNDYTPEHYAPEIPTPGLWGQEEDSYFGYAVSSGFFDSSNPTKLLYVATAPQANKQSGEAYIFDVRGKSIHKYHVFRGEQFGEYFGYSVLAEDLNGDGKTDVIVSAPQHALEDSHDNGAIYVFINKGFFNFERQILRSPVETMARFGTALSRLGDINHDGYNDVAVGAPFAGNGTVFIYLGSENGLRDQPSQRLDAPSQQPSKYGSHMFGHGLSRGSDIDGNGFNDFAIGAPNAEAVYLYRAYPVVKVHATVKSESREIKPEQEKVKITACYRLSTTSTDKLVQEQELAIRIAMDKQLKRVKFTQTQTNEISFKVNANFGEQCRDFETQVRYSEKDIFTPIDLEMHYELTKKVPDSEEFCETCAIVDPTEPKVSTQNIIFSTGCATDVCTADLQLRSKDVSPTYILGSADTLRLNYEITNIGETAYLPQFNVTSTSRLAFAQVPGNCKVVDAVMVCDLNRGRPLAKGDTDSVTISFDVSQLSGQSLIIHAEVFSTGYEQNPTDNRQTNVIGLKEFTEIDASGGQTNSQIDLEHYSNSAEIVNNYEIKSNGPSVIEQLTVSFYIPIAYKVAGSTAIIPIINVTSLKMQASYDSQLLSIDLYDQNNTMLVVDPVEVTTTLSGGLERTVITQNRQSYDIHTSGHVHQTMEVLDTSMVATASMSRKRRDLKALTANREQYARISNVKAHDLLSDDFKGKLPVNRTIVFNCRDPEMTICVRAEMRVHFRPEKSINLNMRYSVDLNEVNAILVDPWEYFVILTDLKLQKKGDPTSTSFSINRRIEPNIISKHQETGLPIWIIIVSVIGGLLLLSAISYLLYKFGFFNRTKKDELDRLVQQNPVEPEAENLNSGGNN</sequence>
<reference key="1">
    <citation type="journal article" date="1997" name="Development">
        <title>A novel alpha integrin subunit associates with betaPS and functions in tissue morphogenesis and movement during Drosophila development.</title>
        <authorList>
            <person name="Stark K.A."/>
            <person name="Yee G.H."/>
            <person name="Roote C.E."/>
            <person name="Williams E.L."/>
            <person name="Zusman S."/>
            <person name="Hynes R.O."/>
        </authorList>
    </citation>
    <scope>NUCLEOTIDE SEQUENCE [MRNA] (ISOFORM B)</scope>
    <scope>FUNCTION</scope>
    <scope>INTERACTION WITH MYS</scope>
    <scope>TISSUE SPECIFICITY</scope>
</reference>
<reference key="2">
    <citation type="journal article" date="1998" name="Nature">
        <title>Integrin-mediated short-term memory in Drosophila.</title>
        <authorList>
            <person name="Grotewiel M.S."/>
            <person name="Beck C.D.O."/>
            <person name="Wu K.H."/>
            <person name="Zhu X.R."/>
            <person name="Davis R.L."/>
        </authorList>
    </citation>
    <scope>NUCLEOTIDE SEQUENCE [MRNA] (ISOFORMS A AND B)</scope>
    <scope>FUNCTION</scope>
    <scope>TISSUE SPECIFICITY</scope>
    <scope>DISRUPTION PHENOTYPE</scope>
</reference>
<reference key="3">
    <citation type="journal article" date="2000" name="Science">
        <title>The genome sequence of Drosophila melanogaster.</title>
        <authorList>
            <person name="Adams M.D."/>
            <person name="Celniker S.E."/>
            <person name="Holt R.A."/>
            <person name="Evans C.A."/>
            <person name="Gocayne J.D."/>
            <person name="Amanatides P.G."/>
            <person name="Scherer S.E."/>
            <person name="Li P.W."/>
            <person name="Hoskins R.A."/>
            <person name="Galle R.F."/>
            <person name="George R.A."/>
            <person name="Lewis S.E."/>
            <person name="Richards S."/>
            <person name="Ashburner M."/>
            <person name="Henderson S.N."/>
            <person name="Sutton G.G."/>
            <person name="Wortman J.R."/>
            <person name="Yandell M.D."/>
            <person name="Zhang Q."/>
            <person name="Chen L.X."/>
            <person name="Brandon R.C."/>
            <person name="Rogers Y.-H.C."/>
            <person name="Blazej R.G."/>
            <person name="Champe M."/>
            <person name="Pfeiffer B.D."/>
            <person name="Wan K.H."/>
            <person name="Doyle C."/>
            <person name="Baxter E.G."/>
            <person name="Helt G."/>
            <person name="Nelson C.R."/>
            <person name="Miklos G.L.G."/>
            <person name="Abril J.F."/>
            <person name="Agbayani A."/>
            <person name="An H.-J."/>
            <person name="Andrews-Pfannkoch C."/>
            <person name="Baldwin D."/>
            <person name="Ballew R.M."/>
            <person name="Basu A."/>
            <person name="Baxendale J."/>
            <person name="Bayraktaroglu L."/>
            <person name="Beasley E.M."/>
            <person name="Beeson K.Y."/>
            <person name="Benos P.V."/>
            <person name="Berman B.P."/>
            <person name="Bhandari D."/>
            <person name="Bolshakov S."/>
            <person name="Borkova D."/>
            <person name="Botchan M.R."/>
            <person name="Bouck J."/>
            <person name="Brokstein P."/>
            <person name="Brottier P."/>
            <person name="Burtis K.C."/>
            <person name="Busam D.A."/>
            <person name="Butler H."/>
            <person name="Cadieu E."/>
            <person name="Center A."/>
            <person name="Chandra I."/>
            <person name="Cherry J.M."/>
            <person name="Cawley S."/>
            <person name="Dahlke C."/>
            <person name="Davenport L.B."/>
            <person name="Davies P."/>
            <person name="de Pablos B."/>
            <person name="Delcher A."/>
            <person name="Deng Z."/>
            <person name="Mays A.D."/>
            <person name="Dew I."/>
            <person name="Dietz S.M."/>
            <person name="Dodson K."/>
            <person name="Doup L.E."/>
            <person name="Downes M."/>
            <person name="Dugan-Rocha S."/>
            <person name="Dunkov B.C."/>
            <person name="Dunn P."/>
            <person name="Durbin K.J."/>
            <person name="Evangelista C.C."/>
            <person name="Ferraz C."/>
            <person name="Ferriera S."/>
            <person name="Fleischmann W."/>
            <person name="Fosler C."/>
            <person name="Gabrielian A.E."/>
            <person name="Garg N.S."/>
            <person name="Gelbart W.M."/>
            <person name="Glasser K."/>
            <person name="Glodek A."/>
            <person name="Gong F."/>
            <person name="Gorrell J.H."/>
            <person name="Gu Z."/>
            <person name="Guan P."/>
            <person name="Harris M."/>
            <person name="Harris N.L."/>
            <person name="Harvey D.A."/>
            <person name="Heiman T.J."/>
            <person name="Hernandez J.R."/>
            <person name="Houck J."/>
            <person name="Hostin D."/>
            <person name="Houston K.A."/>
            <person name="Howland T.J."/>
            <person name="Wei M.-H."/>
            <person name="Ibegwam C."/>
            <person name="Jalali M."/>
            <person name="Kalush F."/>
            <person name="Karpen G.H."/>
            <person name="Ke Z."/>
            <person name="Kennison J.A."/>
            <person name="Ketchum K.A."/>
            <person name="Kimmel B.E."/>
            <person name="Kodira C.D."/>
            <person name="Kraft C.L."/>
            <person name="Kravitz S."/>
            <person name="Kulp D."/>
            <person name="Lai Z."/>
            <person name="Lasko P."/>
            <person name="Lei Y."/>
            <person name="Levitsky A.A."/>
            <person name="Li J.H."/>
            <person name="Li Z."/>
            <person name="Liang Y."/>
            <person name="Lin X."/>
            <person name="Liu X."/>
            <person name="Mattei B."/>
            <person name="McIntosh T.C."/>
            <person name="McLeod M.P."/>
            <person name="McPherson D."/>
            <person name="Merkulov G."/>
            <person name="Milshina N.V."/>
            <person name="Mobarry C."/>
            <person name="Morris J."/>
            <person name="Moshrefi A."/>
            <person name="Mount S.M."/>
            <person name="Moy M."/>
            <person name="Murphy B."/>
            <person name="Murphy L."/>
            <person name="Muzny D.M."/>
            <person name="Nelson D.L."/>
            <person name="Nelson D.R."/>
            <person name="Nelson K.A."/>
            <person name="Nixon K."/>
            <person name="Nusskern D.R."/>
            <person name="Pacleb J.M."/>
            <person name="Palazzolo M."/>
            <person name="Pittman G.S."/>
            <person name="Pan S."/>
            <person name="Pollard J."/>
            <person name="Puri V."/>
            <person name="Reese M.G."/>
            <person name="Reinert K."/>
            <person name="Remington K."/>
            <person name="Saunders R.D.C."/>
            <person name="Scheeler F."/>
            <person name="Shen H."/>
            <person name="Shue B.C."/>
            <person name="Siden-Kiamos I."/>
            <person name="Simpson M."/>
            <person name="Skupski M.P."/>
            <person name="Smith T.J."/>
            <person name="Spier E."/>
            <person name="Spradling A.C."/>
            <person name="Stapleton M."/>
            <person name="Strong R."/>
            <person name="Sun E."/>
            <person name="Svirskas R."/>
            <person name="Tector C."/>
            <person name="Turner R."/>
            <person name="Venter E."/>
            <person name="Wang A.H."/>
            <person name="Wang X."/>
            <person name="Wang Z.-Y."/>
            <person name="Wassarman D.A."/>
            <person name="Weinstock G.M."/>
            <person name="Weissenbach J."/>
            <person name="Williams S.M."/>
            <person name="Woodage T."/>
            <person name="Worley K.C."/>
            <person name="Wu D."/>
            <person name="Yang S."/>
            <person name="Yao Q.A."/>
            <person name="Ye J."/>
            <person name="Yeh R.-F."/>
            <person name="Zaveri J.S."/>
            <person name="Zhan M."/>
            <person name="Zhang G."/>
            <person name="Zhao Q."/>
            <person name="Zheng L."/>
            <person name="Zheng X.H."/>
            <person name="Zhong F.N."/>
            <person name="Zhong W."/>
            <person name="Zhou X."/>
            <person name="Zhu S.C."/>
            <person name="Zhu X."/>
            <person name="Smith H.O."/>
            <person name="Gibbs R.A."/>
            <person name="Myers E.W."/>
            <person name="Rubin G.M."/>
            <person name="Venter J.C."/>
        </authorList>
    </citation>
    <scope>NUCLEOTIDE SEQUENCE [LARGE SCALE GENOMIC DNA]</scope>
    <source>
        <strain>Berkeley</strain>
    </source>
</reference>
<reference key="4">
    <citation type="journal article" date="2002" name="Genome Biol.">
        <title>Annotation of the Drosophila melanogaster euchromatic genome: a systematic review.</title>
        <authorList>
            <person name="Misra S."/>
            <person name="Crosby M.A."/>
            <person name="Mungall C.J."/>
            <person name="Matthews B.B."/>
            <person name="Campbell K.S."/>
            <person name="Hradecky P."/>
            <person name="Huang Y."/>
            <person name="Kaminker J.S."/>
            <person name="Millburn G.H."/>
            <person name="Prochnik S.E."/>
            <person name="Smith C.D."/>
            <person name="Tupy J.L."/>
            <person name="Whitfield E.J."/>
            <person name="Bayraktaroglu L."/>
            <person name="Berman B.P."/>
            <person name="Bettencourt B.R."/>
            <person name="Celniker S.E."/>
            <person name="de Grey A.D.N.J."/>
            <person name="Drysdale R.A."/>
            <person name="Harris N.L."/>
            <person name="Richter J."/>
            <person name="Russo S."/>
            <person name="Schroeder A.J."/>
            <person name="Shu S.Q."/>
            <person name="Stapleton M."/>
            <person name="Yamada C."/>
            <person name="Ashburner M."/>
            <person name="Gelbart W.M."/>
            <person name="Rubin G.M."/>
            <person name="Lewis S.E."/>
        </authorList>
    </citation>
    <scope>GENOME REANNOTATION</scope>
    <scope>ALTERNATIVE SPLICING</scope>
    <source>
        <strain>Berkeley</strain>
    </source>
</reference>
<reference key="5">
    <citation type="submission" date="2005-03" db="EMBL/GenBank/DDBJ databases">
        <authorList>
            <person name="Stapleton M."/>
            <person name="Carlson J.W."/>
            <person name="Chavez C."/>
            <person name="Frise E."/>
            <person name="George R.A."/>
            <person name="Pacleb J.M."/>
            <person name="Park S."/>
            <person name="Wan K.H."/>
            <person name="Yu C."/>
            <person name="Rubin G.M."/>
            <person name="Celniker S.E."/>
        </authorList>
    </citation>
    <scope>NUCLEOTIDE SEQUENCE [LARGE SCALE MRNA] (ISOFORMS A AND B)</scope>
    <source>
        <strain>Berkeley</strain>
        <tissue>Larva</tissue>
        <tissue>Pupae</tissue>
    </source>
</reference>
<reference key="6">
    <citation type="journal article" date="2004" name="Development">
        <title>Morphogenesis in the absence of integrins: mutation of both Drosophila beta subunits prevents midgut migration.</title>
        <authorList>
            <person name="Devenport D."/>
            <person name="Brown N.H."/>
        </authorList>
    </citation>
    <scope>INTERACTION WITH ITGBN</scope>
    <scope>SUBCELLULAR LOCATION</scope>
    <scope>TISSUE SPECIFICITY</scope>
</reference>
<reference key="7">
    <citation type="journal article" date="2007" name="Glycobiology">
        <title>Identification of N-glycosylated proteins from the central nervous system of Drosophila melanogaster.</title>
        <authorList>
            <person name="Koles K."/>
            <person name="Lim J.-M."/>
            <person name="Aoki K."/>
            <person name="Porterfield M."/>
            <person name="Tiemeyer M."/>
            <person name="Wells L."/>
            <person name="Panin V."/>
        </authorList>
    </citation>
    <scope>GLYCOSYLATION [LARGE SCALE ANALYSIS] AT ASN-82</scope>
    <scope>IDENTIFICATION BY MASS SPECTROMETRY</scope>
    <source>
        <strain>Oregon-R</strain>
        <tissue>Head</tissue>
    </source>
</reference>
<reference key="8">
    <citation type="journal article" date="2008" name="Dev. Dyn.">
        <title>Integrin alpha chains exhibit distinct temporal and spatial localization patterns in epithelial cells of the Drosophila ovary.</title>
        <authorList>
            <person name="Dinkins M.B."/>
            <person name="Fratto V.M."/>
            <person name="Lemosy E.K."/>
        </authorList>
    </citation>
    <scope>FUNCTION</scope>
    <scope>SUBCELLULAR LOCATION</scope>
    <scope>TISSUE SPECIFICITY</scope>
    <scope>DEVELOPMENTAL STAGE</scope>
</reference>
<reference key="9">
    <citation type="journal article" date="2008" name="Neural Dev.">
        <title>Fak56 functions downstream of integrin alphaPS3betanu and suppresses MAPK activation in neuromuscular junction growth.</title>
        <authorList>
            <person name="Tsai P.I."/>
            <person name="Kao H.H."/>
            <person name="Grabbe C."/>
            <person name="Lee Y.T."/>
            <person name="Ghose A."/>
            <person name="Lai T.T."/>
            <person name="Peng K.P."/>
            <person name="Van Vactor D."/>
            <person name="Palmer R.H."/>
            <person name="Chen R.H."/>
            <person name="Yeh S.R."/>
            <person name="Chien C.T."/>
        </authorList>
    </citation>
    <scope>FUNCTION</scope>
</reference>
<reference key="10">
    <citation type="journal article" date="2009" name="Nat. Biotechnol.">
        <title>Mass-spectrometric identification and relative quantification of N-linked cell surface glycoproteins.</title>
        <authorList>
            <person name="Wollscheid B."/>
            <person name="Bausch-Fluck D."/>
            <person name="Henderson C."/>
            <person name="O'Brien R."/>
            <person name="Bibel M."/>
            <person name="Schiess R."/>
            <person name="Aebersold R."/>
            <person name="Watts J.D."/>
        </authorList>
    </citation>
    <scope>GLYCOSYLATION [LARGE SCALE ANALYSIS] AT ASN-82</scope>
    <scope>IDENTIFICATION BY MASS SPECTROMETRY</scope>
</reference>
<reference key="11">
    <citation type="journal article" date="2013" name="J. Biol. Chem.">
        <title>Integrin alphaPS3/betanu-mediated phagocytosis of apoptotic cells and bacteria in Drosophila.</title>
        <authorList>
            <person name="Nonaka S."/>
            <person name="Nagaosa K."/>
            <person name="Mori T."/>
            <person name="Shiratsuchi A."/>
            <person name="Nakanishi Y."/>
        </authorList>
    </citation>
    <scope>FUNCTION</scope>
    <scope>INTERACTION WITH ITGBN</scope>
    <scope>TISSUE SPECIFICITY</scope>
    <scope>DEVELOPMENTAL STAGE</scope>
    <scope>DISRUPTION PHENOTYPE</scope>
</reference>